<keyword id="KW-1003">Cell membrane</keyword>
<keyword id="KW-0903">Direct protein sequencing</keyword>
<keyword id="KW-1015">Disulfide bond</keyword>
<keyword id="KW-0325">Glycoprotein</keyword>
<keyword id="KW-0393">Immunoglobulin domain</keyword>
<keyword id="KW-0472">Membrane</keyword>
<keyword id="KW-0597">Phosphoprotein</keyword>
<keyword id="KW-1185">Reference proteome</keyword>
<keyword id="KW-0677">Repeat</keyword>
<keyword id="KW-0732">Signal</keyword>
<keyword id="KW-0770">Synapse</keyword>
<keyword id="KW-0812">Transmembrane</keyword>
<keyword id="KW-1133">Transmembrane helix</keyword>
<accession>O88775</accession>
<evidence type="ECO:0000250" key="1"/>
<evidence type="ECO:0000250" key="2">
    <source>
        <dbReference type="UniProtKB" id="P21995"/>
    </source>
</evidence>
<evidence type="ECO:0000255" key="3"/>
<evidence type="ECO:0000255" key="4">
    <source>
        <dbReference type="PROSITE-ProRule" id="PRU00114"/>
    </source>
</evidence>
<evidence type="ECO:0000256" key="5">
    <source>
        <dbReference type="SAM" id="MobiDB-lite"/>
    </source>
</evidence>
<evidence type="ECO:0000269" key="6">
    <source>
    </source>
</evidence>
<evidence type="ECO:0000269" key="7">
    <source>
    </source>
</evidence>
<evidence type="ECO:0000269" key="8">
    <source>
    </source>
</evidence>
<evidence type="ECO:0000269" key="9">
    <source>
    </source>
</evidence>
<evidence type="ECO:0000269" key="10">
    <source>
    </source>
</evidence>
<evidence type="ECO:0000269" key="11">
    <source>
    </source>
</evidence>
<evidence type="ECO:0000269" key="12">
    <source>
    </source>
</evidence>
<evidence type="ECO:0000305" key="13">
    <source>
    </source>
</evidence>
<evidence type="ECO:0000305" key="14">
    <source>
    </source>
</evidence>
<evidence type="ECO:0007744" key="15">
    <source>
    </source>
</evidence>
<organism>
    <name type="scientific">Rattus norvegicus</name>
    <name type="common">Rat</name>
    <dbReference type="NCBI Taxonomy" id="10116"/>
    <lineage>
        <taxon>Eukaryota</taxon>
        <taxon>Metazoa</taxon>
        <taxon>Chordata</taxon>
        <taxon>Craniata</taxon>
        <taxon>Vertebrata</taxon>
        <taxon>Euteleostomi</taxon>
        <taxon>Mammalia</taxon>
        <taxon>Eutheria</taxon>
        <taxon>Euarchontoglires</taxon>
        <taxon>Glires</taxon>
        <taxon>Rodentia</taxon>
        <taxon>Myomorpha</taxon>
        <taxon>Muroidea</taxon>
        <taxon>Muridae</taxon>
        <taxon>Murinae</taxon>
        <taxon>Rattus</taxon>
    </lineage>
</organism>
<name>EMB_RAT</name>
<proteinExistence type="evidence at protein level"/>
<feature type="signal peptide" evidence="3">
    <location>
        <begin position="1"/>
        <end position="33"/>
    </location>
</feature>
<feature type="chain" id="PRO_0000014751" description="Embigin">
    <location>
        <begin position="34"/>
        <end position="328"/>
    </location>
</feature>
<feature type="topological domain" description="Extracellular" evidence="3">
    <location>
        <begin position="34"/>
        <end position="264"/>
    </location>
</feature>
<feature type="transmembrane region" description="Helical" evidence="3">
    <location>
        <begin position="265"/>
        <end position="285"/>
    </location>
</feature>
<feature type="topological domain" description="Cytoplasmic" evidence="3">
    <location>
        <begin position="286"/>
        <end position="328"/>
    </location>
</feature>
<feature type="domain" description="Ig-like 1">
    <location>
        <begin position="67"/>
        <end position="160"/>
    </location>
</feature>
<feature type="domain" description="Ig-like 2">
    <location>
        <begin position="159"/>
        <end position="254"/>
    </location>
</feature>
<feature type="region of interest" description="Disordered" evidence="5">
    <location>
        <begin position="289"/>
        <end position="328"/>
    </location>
</feature>
<feature type="compositionally biased region" description="Basic and acidic residues" evidence="5">
    <location>
        <begin position="289"/>
        <end position="309"/>
    </location>
</feature>
<feature type="modified residue" description="Phosphoserine" evidence="15">
    <location>
        <position position="310"/>
    </location>
</feature>
<feature type="glycosylation site" description="N-linked (GlcNAc...) asparagine" evidence="3">
    <location>
        <position position="55"/>
    </location>
</feature>
<feature type="glycosylation site" description="N-linked (GlcNAc...) asparagine" evidence="3">
    <location>
        <position position="62"/>
    </location>
</feature>
<feature type="glycosylation site" description="N-linked (GlcNAc...) asparagine" evidence="3">
    <location>
        <position position="75"/>
    </location>
</feature>
<feature type="glycosylation site" description="N-linked (GlcNAc...) asparagine" evidence="3">
    <location>
        <position position="100"/>
    </location>
</feature>
<feature type="glycosylation site" description="N-linked (GlcNAc...) asparagine" evidence="3">
    <location>
        <position position="117"/>
    </location>
</feature>
<feature type="glycosylation site" description="N-linked (GlcNAc...) asparagine" evidence="3">
    <location>
        <position position="189"/>
    </location>
</feature>
<feature type="glycosylation site" description="N-linked (GlcNAc...) asparagine" evidence="3">
    <location>
        <position position="196"/>
    </location>
</feature>
<feature type="glycosylation site" description="N-linked (GlcNAc...) asparagine" evidence="3">
    <location>
        <position position="214"/>
    </location>
</feature>
<feature type="glycosylation site" description="N-linked (GlcNAc...) asparagine" evidence="3">
    <location>
        <position position="219"/>
    </location>
</feature>
<feature type="disulfide bond" evidence="4">
    <location>
        <begin position="88"/>
        <end position="144"/>
    </location>
</feature>
<feature type="disulfide bond" evidence="4">
    <location>
        <begin position="180"/>
        <end position="238"/>
    </location>
</feature>
<comment type="function">
    <text evidence="1 8 9 10">Plays a role in the outgrowth of motoneurons and in the formation of neuromuscular junctions. Following muscle denervation, promotes nerve terminal sprouting and the formation of additional acetylcholine receptor clusters at synaptic sites without affecting terminal Schwann cell number or morphology. Delays the retraction of terminal sprouts following re-innervation of denervated endplates (By similarity). Plays a role in targeting the monocarboxylate transporters SLC16A1, SLC16A6 and SLC16A7 to the cell membrane.</text>
</comment>
<comment type="subunit">
    <text evidence="6 8 9 10 11">Interacts with SLC16A1, SLC16A6 and SLC16A7.</text>
</comment>
<comment type="subcellular location">
    <subcellularLocation>
        <location evidence="9 11">Cell membrane</location>
        <topology evidence="13 14">Single-pass type I membrane protein</topology>
    </subcellularLocation>
    <subcellularLocation>
        <location evidence="2">Synapse</location>
    </subcellularLocation>
    <text evidence="2">Localizes to the neuromuscular junctions.</text>
</comment>
<comment type="tissue specificity">
    <text evidence="11 12">Detected in prostate, mammary gland and erythrocytes (at protein level). Detected in testis, brain, prostate, heart, kidney, liver, mammary gland and lung.</text>
</comment>
<comment type="induction">
    <text evidence="7">Regulated by muscle activity. Strongly up-regulated after muscle denervation, including that of soleus muscle. Expression is significantly increased 3 days after denervation and reaches a maximum, about 130-fold increase, after 5 days.</text>
</comment>
<comment type="PTM">
    <text evidence="11">N-glycosylated.</text>
</comment>
<reference key="1">
    <citation type="journal article" date="1997" name="Dev. Genet.">
        <title>Embigin, a developmentally expressed member of the immunoglobulin super family, is also expressed during regression of prostate and mammary gland.</title>
        <authorList>
            <person name="Guenette R."/>
            <person name="Sridhar S."/>
            <person name="Herley M."/>
            <person name="Mooibroek M."/>
            <person name="Wong P."/>
            <person name="Tenniswood M."/>
        </authorList>
    </citation>
    <scope>NUCLEOTIDE SEQUENCE [MRNA]</scope>
    <scope>TISSUE SPECIFICITY</scope>
    <source>
        <strain>Sprague-Dawley</strain>
        <tissue>Prostate</tissue>
    </source>
</reference>
<reference key="2">
    <citation type="journal article" date="2004" name="Genome Res.">
        <title>The status, quality, and expansion of the NIH full-length cDNA project: the Mammalian Gene Collection (MGC).</title>
        <authorList>
            <consortium name="The MGC Project Team"/>
        </authorList>
    </citation>
    <scope>NUCLEOTIDE SEQUENCE [LARGE SCALE MRNA]</scope>
    <source>
        <tissue>Prostate</tissue>
    </source>
</reference>
<reference key="3">
    <citation type="journal article" date="1997" name="J. Biol. Chem.">
        <title>Interaction of the erythrocyte lactate transporter (monocarboxylate transporter 1) with an integral 70-kDa membrane glycoprotein of the immunoglobulin superfamily.</title>
        <authorList>
            <person name="Poole R.C."/>
            <person name="Halestrap A.P."/>
        </authorList>
    </citation>
    <scope>PROTEIN SEQUENCE OF 121-135</scope>
    <scope>INTERACTION WITH SLC16A1</scope>
    <scope>GLYCOSYLATION</scope>
    <scope>TISSUE SPECIFICITY</scope>
    <scope>SUBCELLULAR LOCATION</scope>
</reference>
<reference key="4">
    <citation type="submission" date="2007-09" db="UniProtKB">
        <authorList>
            <person name="Lubec G."/>
            <person name="Kang S.U."/>
            <person name="Lubec S."/>
        </authorList>
    </citation>
    <scope>PROTEIN SEQUENCE OF 142-151; 165-179 AND 240-252</scope>
    <scope>IDENTIFICATION BY MASS SPECTROMETRY</scope>
    <source>
        <strain>Sprague-Dawley</strain>
        <tissue>Brain</tissue>
    </source>
</reference>
<reference key="5">
    <citation type="journal article" date="2005" name="J. Biol. Chem.">
        <title>Basigin (CD147) is the target for organomercurial inhibition of monocarboxylate transporter isoforms 1 and 4: the ancillary protein for the insensitive MCT2 is EMBIGIN (gp70).</title>
        <authorList>
            <person name="Wilson M.C."/>
            <person name="Meredith D."/>
            <person name="Fox J.E."/>
            <person name="Manoharan C."/>
            <person name="Davies A.J."/>
            <person name="Halestrap A.P."/>
        </authorList>
    </citation>
    <scope>INTERACTION WITH SLC16A7</scope>
</reference>
<reference key="6">
    <citation type="journal article" date="2009" name="J. Biol. Chem.">
        <title>A novel role for embigin to promote sprouting of motor nerve terminals at the neuromuscular junction.</title>
        <authorList>
            <person name="Lain E."/>
            <person name="Carnejac S."/>
            <person name="Escher P."/>
            <person name="Wilson M.C."/>
            <person name="Lomo T."/>
            <person name="Gajendran N."/>
            <person name="Brenner H.R."/>
        </authorList>
    </citation>
    <scope>INDUCTION</scope>
</reference>
<reference key="7">
    <citation type="journal article" date="2009" name="J. Biol. Chem.">
        <title>Studies on the DIDS-binding site of monocarboxylate transporter 1 suggest a homology model of the open conformation and a plausible translocation cycle.</title>
        <authorList>
            <person name="Wilson M.C."/>
            <person name="Meredith D."/>
            <person name="Bunnun C."/>
            <person name="Sessions R.B."/>
            <person name="Halestrap A.P."/>
        </authorList>
    </citation>
    <scope>FUNCTION</scope>
    <scope>INTERACTION WITH SLC16A1</scope>
    <scope>SUBCELLULAR LOCATION</scope>
    <scope>TOPOLOGY</scope>
</reference>
<reference key="8">
    <citation type="journal article" date="2010" name="Biochem. J.">
        <title>The inhibition of monocarboxylate transporter 2 (MCT2) by AR-C155858 is modulated by the associated ancillary protein.</title>
        <authorList>
            <person name="Ovens M.J."/>
            <person name="Manoharan C."/>
            <person name="Wilson M.C."/>
            <person name="Murray C.M."/>
            <person name="Halestrap A.P."/>
        </authorList>
    </citation>
    <scope>FUNCTION</scope>
    <scope>INTERACTION WITH SLC16A7</scope>
</reference>
<reference key="9">
    <citation type="journal article" date="2012" name="Nat. Commun.">
        <title>Quantitative maps of protein phosphorylation sites across 14 different rat organs and tissues.</title>
        <authorList>
            <person name="Lundby A."/>
            <person name="Secher A."/>
            <person name="Lage K."/>
            <person name="Nordsborg N.B."/>
            <person name="Dmytriyev A."/>
            <person name="Lundby C."/>
            <person name="Olsen J.V."/>
        </authorList>
    </citation>
    <scope>PHOSPHORYLATION [LARGE SCALE ANALYSIS] AT SER-310</scope>
    <scope>IDENTIFICATION BY MASS SPECTROMETRY [LARGE SCALE ANALYSIS]</scope>
</reference>
<reference key="10">
    <citation type="journal article" date="2022" name="J. Biol. Chem.">
        <title>Mammalian monocarboxylate transporter 7 (MCT7/Slc16a6) is a novel facilitative taurine transporter.</title>
        <authorList>
            <person name="Higuchi K."/>
            <person name="Sugiyama K."/>
            <person name="Tomabechi R."/>
            <person name="Kishimoto H."/>
            <person name="Inoue K."/>
        </authorList>
    </citation>
    <scope>FUNCTION</scope>
    <scope>INTERACTION WITH SLC16A6</scope>
</reference>
<sequence length="328" mass="37005">MRSHTGLRALVAPGCSLLLLYLLAATRPDRAVGDPADSAFTSLPVREEMMAKYANLSLETYNISLTEQTRVSEQNITLERPSHLELECTFTATEDVMSMNVTWKKDDALLETTDGFNTTKMGDTLYSQYRFTVFNSKQMGKYSCFLGEELRGTFNIRVPKVHGKNKPLITYVGDSTVLKCECQNCLPLNWTWYMSNGTAQVPIDVHVNDKFDINGSYANETKLKVKHLLEEDGGSYWCRAAFPLGESEEHIKLVVLSFMVPLKPFLAIIAEVILLVAIILLCEVYTQKKKNDPDDGKEFEQIEQLKSDDSNGIENNVPRYRKTDSGDQ</sequence>
<dbReference type="EMBL" id="AJ009698">
    <property type="protein sequence ID" value="CAA08796.1"/>
    <property type="molecule type" value="mRNA"/>
</dbReference>
<dbReference type="EMBL" id="BC061846">
    <property type="protein sequence ID" value="AAH61846.1"/>
    <property type="molecule type" value="mRNA"/>
</dbReference>
<dbReference type="RefSeq" id="NP_446171.1">
    <property type="nucleotide sequence ID" value="NM_053719.1"/>
</dbReference>
<dbReference type="SMR" id="O88775"/>
<dbReference type="FunCoup" id="O88775">
    <property type="interactions" value="1147"/>
</dbReference>
<dbReference type="STRING" id="10116.ENSRNOP00000069012"/>
<dbReference type="TCDB" id="8.A.23.1.67">
    <property type="family name" value="the basigin (basigin) family"/>
</dbReference>
<dbReference type="GlyCosmos" id="O88775">
    <property type="glycosylation" value="9 sites, No reported glycans"/>
</dbReference>
<dbReference type="GlyGen" id="O88775">
    <property type="glycosylation" value="9 sites"/>
</dbReference>
<dbReference type="iPTMnet" id="O88775"/>
<dbReference type="PhosphoSitePlus" id="O88775"/>
<dbReference type="SwissPalm" id="O88775"/>
<dbReference type="jPOST" id="O88775"/>
<dbReference type="PaxDb" id="10116-ENSRNOP00000015306"/>
<dbReference type="Ensembl" id="ENSRNOT00000085576.2">
    <property type="protein sequence ID" value="ENSRNOP00000069959.2"/>
    <property type="gene ID" value="ENSRNOG00000060329.2"/>
</dbReference>
<dbReference type="GeneID" id="114511"/>
<dbReference type="KEGG" id="rno:114511"/>
<dbReference type="AGR" id="RGD:621067"/>
<dbReference type="CTD" id="133418"/>
<dbReference type="RGD" id="621067">
    <property type="gene designation" value="Emb"/>
</dbReference>
<dbReference type="eggNOG" id="ENOG502RXAE">
    <property type="taxonomic scope" value="Eukaryota"/>
</dbReference>
<dbReference type="GeneTree" id="ENSGT00940000158944"/>
<dbReference type="InParanoid" id="O88775"/>
<dbReference type="OMA" id="KGSYWCH"/>
<dbReference type="OrthoDB" id="9932757at2759"/>
<dbReference type="PhylomeDB" id="O88775"/>
<dbReference type="TreeFam" id="TF326759"/>
<dbReference type="Reactome" id="R-RNO-433692">
    <property type="pathway name" value="Proton-coupled monocarboxylate transport"/>
</dbReference>
<dbReference type="PRO" id="PR:O88775"/>
<dbReference type="Proteomes" id="UP000002494">
    <property type="component" value="Chromosome 2"/>
</dbReference>
<dbReference type="GO" id="GO:0030424">
    <property type="term" value="C:axon"/>
    <property type="evidence" value="ECO:0000318"/>
    <property type="project" value="GO_Central"/>
</dbReference>
<dbReference type="GO" id="GO:0005886">
    <property type="term" value="C:plasma membrane"/>
    <property type="evidence" value="ECO:0000314"/>
    <property type="project" value="UniProtKB"/>
</dbReference>
<dbReference type="GO" id="GO:0045202">
    <property type="term" value="C:synapse"/>
    <property type="evidence" value="ECO:0007669"/>
    <property type="project" value="UniProtKB-SubCell"/>
</dbReference>
<dbReference type="GO" id="GO:0098632">
    <property type="term" value="F:cell-cell adhesion mediator activity"/>
    <property type="evidence" value="ECO:0000318"/>
    <property type="project" value="GO_Central"/>
</dbReference>
<dbReference type="GO" id="GO:0007411">
    <property type="term" value="P:axon guidance"/>
    <property type="evidence" value="ECO:0000318"/>
    <property type="project" value="GO_Central"/>
</dbReference>
<dbReference type="GO" id="GO:0007155">
    <property type="term" value="P:cell adhesion"/>
    <property type="evidence" value="ECO:0000314"/>
    <property type="project" value="RGD"/>
</dbReference>
<dbReference type="GO" id="GO:0070593">
    <property type="term" value="P:dendrite self-avoidance"/>
    <property type="evidence" value="ECO:0000318"/>
    <property type="project" value="GO_Central"/>
</dbReference>
<dbReference type="GO" id="GO:0007156">
    <property type="term" value="P:homophilic cell adhesion via plasma membrane adhesion molecules"/>
    <property type="evidence" value="ECO:0000318"/>
    <property type="project" value="GO_Central"/>
</dbReference>
<dbReference type="GO" id="GO:0035879">
    <property type="term" value="P:plasma membrane lactate transport"/>
    <property type="evidence" value="ECO:0000314"/>
    <property type="project" value="RGD"/>
</dbReference>
<dbReference type="CDD" id="cd00096">
    <property type="entry name" value="Ig"/>
    <property type="match status" value="1"/>
</dbReference>
<dbReference type="FunFam" id="2.60.40.10:FF:001012">
    <property type="entry name" value="Embigin"/>
    <property type="match status" value="1"/>
</dbReference>
<dbReference type="FunFam" id="2.60.40.10:FF:001288">
    <property type="entry name" value="Embigin"/>
    <property type="match status" value="1"/>
</dbReference>
<dbReference type="Gene3D" id="2.60.40.10">
    <property type="entry name" value="Immunoglobulins"/>
    <property type="match status" value="2"/>
</dbReference>
<dbReference type="InterPro" id="IPR007110">
    <property type="entry name" value="Ig-like_dom"/>
</dbReference>
<dbReference type="InterPro" id="IPR036179">
    <property type="entry name" value="Ig-like_dom_sf"/>
</dbReference>
<dbReference type="InterPro" id="IPR013783">
    <property type="entry name" value="Ig-like_fold"/>
</dbReference>
<dbReference type="InterPro" id="IPR013098">
    <property type="entry name" value="Ig_I-set"/>
</dbReference>
<dbReference type="InterPro" id="IPR003599">
    <property type="entry name" value="Ig_sub"/>
</dbReference>
<dbReference type="Pfam" id="PF07679">
    <property type="entry name" value="I-set"/>
    <property type="match status" value="1"/>
</dbReference>
<dbReference type="SMART" id="SM00409">
    <property type="entry name" value="IG"/>
    <property type="match status" value="2"/>
</dbReference>
<dbReference type="SUPFAM" id="SSF48726">
    <property type="entry name" value="Immunoglobulin"/>
    <property type="match status" value="2"/>
</dbReference>
<dbReference type="PROSITE" id="PS50835">
    <property type="entry name" value="IG_LIKE"/>
    <property type="match status" value="2"/>
</dbReference>
<protein>
    <recommendedName>
        <fullName>Embigin</fullName>
    </recommendedName>
</protein>
<gene>
    <name type="primary">Emb</name>
    <name type="synonym">Gp70</name>
</gene>